<reference key="1">
    <citation type="journal article" date="1985" name="Gene">
        <title>The traM gene of the resistance plasmid R1: comparison with the corresponding sequence of the Escherichia coli F factor.</title>
        <authorList>
            <person name="Koronakis V.E."/>
            <person name="Bauer E."/>
            <person name="Hogenauer G."/>
        </authorList>
    </citation>
    <scope>NUCLEOTIDE SEQUENCE [GENOMIC DNA]</scope>
    <source>
        <plasmid>IncFII R1</plasmid>
    </source>
</reference>
<reference key="2">
    <citation type="journal article" date="1986" name="J. Bacteriol.">
        <title>Nucleotide sequences of the R1-19 plasmid transfer genes traM, finP, traJ, and traY and the traYZ promoter.</title>
        <authorList>
            <person name="Finlay B.B."/>
            <person name="Frost L.S."/>
            <person name="Paranchych W."/>
        </authorList>
    </citation>
    <scope>NUCLEOTIDE SEQUENCE [GENOMIC DNA]</scope>
    <source>
        <plasmid>IncFII R1-19 (R1 drd-19)</plasmid>
    </source>
</reference>
<reference key="3">
    <citation type="journal article" date="1991" name="Mol. Microbiol.">
        <title>The TraM protein of plasmid R1 is a DNA-binding protein.</title>
        <authorList>
            <person name="Schwab M."/>
            <person name="Gruber H."/>
            <person name="Hogenauer G."/>
        </authorList>
    </citation>
    <scope>DNA-BINDING</scope>
    <source>
        <plasmid>IncFII R1</plasmid>
    </source>
</reference>
<reference key="4">
    <citation type="journal article" date="2001" name="Biochemistry">
        <title>Solution structure of the DNA-binding domain of TraM.</title>
        <authorList>
            <person name="Stockner T."/>
            <person name="Plugariu C."/>
            <person name="Koraimann G."/>
            <person name="Hogenauer G."/>
            <person name="Bermel W."/>
            <person name="Prytulla S."/>
            <person name="Sterk H."/>
        </authorList>
    </citation>
    <scope>STRUCTURE BY NMR OF 2-56</scope>
    <source>
        <plasmid>IncFII R1</plasmid>
    </source>
</reference>
<sequence length="127" mass="14446">MAKVQAYVSDEIVYKINKIVERRRAEGAKSTDVSFSSISTMLLELGLRVYEAQMERKESAFNQAEFNKVLLECAVKTQSTVAKILGIESLSPHVSGNPKFEYANMVEDIRDKVSSEMERFFPENDEE</sequence>
<evidence type="ECO:0000250" key="1"/>
<evidence type="ECO:0000305" key="2"/>
<evidence type="ECO:0007829" key="3">
    <source>
        <dbReference type="PDB" id="1DP3"/>
    </source>
</evidence>
<proteinExistence type="evidence at protein level"/>
<feature type="chain" id="PRO_0000068468" description="Relaxosome protein TraM">
    <location>
        <begin position="1"/>
        <end position="127"/>
    </location>
</feature>
<feature type="helix" evidence="3">
    <location>
        <begin position="12"/>
        <end position="26"/>
    </location>
</feature>
<feature type="helix" evidence="3">
    <location>
        <begin position="35"/>
        <end position="44"/>
    </location>
</feature>
<feature type="turn" evidence="3">
    <location>
        <begin position="45"/>
        <end position="47"/>
    </location>
</feature>
<feature type="helix" evidence="3">
    <location>
        <begin position="49"/>
        <end position="52"/>
    </location>
</feature>
<geneLocation type="plasmid">
    <name>IncFII R1</name>
</geneLocation>
<geneLocation type="plasmid">
    <name>IncFII R1-19</name>
    <name>R1 drd-19</name>
</geneLocation>
<organism>
    <name type="scientific">Escherichia coli</name>
    <dbReference type="NCBI Taxonomy" id="562"/>
    <lineage>
        <taxon>Bacteria</taxon>
        <taxon>Pseudomonadati</taxon>
        <taxon>Pseudomonadota</taxon>
        <taxon>Gammaproteobacteria</taxon>
        <taxon>Enterobacterales</taxon>
        <taxon>Enterobacteriaceae</taxon>
        <taxon>Escherichia</taxon>
    </lineage>
</organism>
<accession>P07294</accession>
<keyword id="KW-0002">3D-structure</keyword>
<keyword id="KW-0184">Conjugation</keyword>
<keyword id="KW-0963">Cytoplasm</keyword>
<keyword id="KW-0238">DNA-binding</keyword>
<keyword id="KW-0614">Plasmid</keyword>
<keyword id="KW-0804">Transcription</keyword>
<keyword id="KW-0805">Transcription regulation</keyword>
<dbReference type="EMBL" id="AH003433">
    <property type="protein sequence ID" value="AAA92656.1"/>
    <property type="molecule type" value="Genomic_DNA"/>
</dbReference>
<dbReference type="PIR" id="A23956">
    <property type="entry name" value="JCECMR"/>
</dbReference>
<dbReference type="RefSeq" id="WP_001151564.1">
    <property type="nucleotide sequence ID" value="NZ_WWEV01000072.1"/>
</dbReference>
<dbReference type="RefSeq" id="YP_003108299.1">
    <property type="nucleotide sequence ID" value="NC_013122.1"/>
</dbReference>
<dbReference type="RefSeq" id="YP_003829131.1">
    <property type="nucleotide sequence ID" value="NC_014384.1"/>
</dbReference>
<dbReference type="RefSeq" id="YP_003829256.1">
    <property type="nucleotide sequence ID" value="NC_014385.1"/>
</dbReference>
<dbReference type="PDB" id="1DP3">
    <property type="method" value="NMR"/>
    <property type="chains" value="A=2-56"/>
</dbReference>
<dbReference type="PDBsum" id="1DP3"/>
<dbReference type="BMRB" id="P07294"/>
<dbReference type="SMR" id="P07294"/>
<dbReference type="DIP" id="DIP-27656N"/>
<dbReference type="OMA" id="TQMERKE"/>
<dbReference type="EvolutionaryTrace" id="P07294"/>
<dbReference type="GO" id="GO:0005737">
    <property type="term" value="C:cytoplasm"/>
    <property type="evidence" value="ECO:0007669"/>
    <property type="project" value="UniProtKB-SubCell"/>
</dbReference>
<dbReference type="GO" id="GO:0003677">
    <property type="term" value="F:DNA binding"/>
    <property type="evidence" value="ECO:0007669"/>
    <property type="project" value="UniProtKB-KW"/>
</dbReference>
<dbReference type="CDD" id="cd14804">
    <property type="entry name" value="Tra_M"/>
    <property type="match status" value="1"/>
</dbReference>
<dbReference type="Gene3D" id="1.10.287.2320">
    <property type="match status" value="1"/>
</dbReference>
<dbReference type="Gene3D" id="1.10.10.450">
    <property type="entry name" value="TraM protein, DNA-binding"/>
    <property type="match status" value="1"/>
</dbReference>
<dbReference type="InterPro" id="IPR010992">
    <property type="entry name" value="IHF-like_DNA-bd_dom_sf"/>
</dbReference>
<dbReference type="InterPro" id="IPR042073">
    <property type="entry name" value="TraM_DNA-bd"/>
</dbReference>
<dbReference type="InterPro" id="IPR007925">
    <property type="entry name" value="TRelaxosome_TraM"/>
</dbReference>
<dbReference type="NCBIfam" id="NF010267">
    <property type="entry name" value="PRK13713.1"/>
    <property type="match status" value="1"/>
</dbReference>
<dbReference type="Pfam" id="PF05261">
    <property type="entry name" value="Tra_M"/>
    <property type="match status" value="1"/>
</dbReference>
<dbReference type="SUPFAM" id="SSF47729">
    <property type="entry name" value="IHF-like DNA-binding proteins"/>
    <property type="match status" value="1"/>
</dbReference>
<dbReference type="SUPFAM" id="SSF140581">
    <property type="entry name" value="TraM-like"/>
    <property type="match status" value="1"/>
</dbReference>
<gene>
    <name type="primary">traM</name>
</gene>
<comment type="function">
    <text evidence="1">Conjugative DNA transfer (CDT) is the unidirectional transfer of ssDNA plasmid from a donor to a recipient cell. It is the central mechanism by which antibiotic resistance and virulence factors are propagated in bacterial populations. Part of the relaxosome, which facilitates a site- and strand-specific cut in the origin of transfer by TraI, at the nic site. Probably autoregulates its own expression. Plasmid specificity is conferred by the TraD-TraM pair (By similarity).</text>
</comment>
<comment type="subunit">
    <text evidence="1">Homotetramer. 2 homotetramers cooperatively bind to DNA although they do not contact each other; cooperativity is achieved by DNA kinking and unwinding. Part of the relaxosome, a complex composed of plasmid encoded TraI, TraM, TraY and host-encoded IHF which binds to the F plasmid origin of transfer (oriT) in a site- and sequence-specific manner. Interacts with TraD. Also interacts with TraY (By similarity).</text>
</comment>
<comment type="subcellular location">
    <subcellularLocation>
        <location evidence="1">Cytoplasm</location>
    </subcellularLocation>
</comment>
<comment type="similarity">
    <text evidence="2">Belongs to the relaxosome TraM family.</text>
</comment>
<name>TRAM2_ECOLX</name>
<protein>
    <recommendedName>
        <fullName>Relaxosome protein TraM</fullName>
    </recommendedName>
</protein>